<accession>Q02QE8</accession>
<organism>
    <name type="scientific">Pseudomonas aeruginosa (strain UCBPP-PA14)</name>
    <dbReference type="NCBI Taxonomy" id="208963"/>
    <lineage>
        <taxon>Bacteria</taxon>
        <taxon>Pseudomonadati</taxon>
        <taxon>Pseudomonadota</taxon>
        <taxon>Gammaproteobacteria</taxon>
        <taxon>Pseudomonadales</taxon>
        <taxon>Pseudomonadaceae</taxon>
        <taxon>Pseudomonas</taxon>
    </lineage>
</organism>
<sequence length="267" mass="28634">MSLSLDGVDLVHADGQRALADIRLRLAAGERVALIGPSGAGKTSLLRVLASQWRPSAGRVELLGEEPWALSAAARQRLRARIGLVHQAPPLPPRQRVVSAVLAGRLGQWPLWKSLASLVYPLDRAGAHDALQRLDLGDKLFQRCDQLSGGQLQRVGIARVLYQRAELILADEPVSAMDPVLAGHTLALLNREAAARGSTLLASLHAVDLALQHFPRVIGLRAGRIAFDLPAGEVDRAALDALYANEQLQAERASPASEPAVVHIPRC</sequence>
<comment type="function">
    <text evidence="1">Part of the ABC transporter complex PhnCDE involved in phosphonates import. Responsible for energy coupling to the transport system.</text>
</comment>
<comment type="catalytic activity">
    <reaction evidence="1">
        <text>phosphonate(out) + ATP + H2O = phosphonate(in) + ADP + phosphate + H(+)</text>
        <dbReference type="Rhea" id="RHEA:18065"/>
        <dbReference type="ChEBI" id="CHEBI:15377"/>
        <dbReference type="ChEBI" id="CHEBI:15378"/>
        <dbReference type="ChEBI" id="CHEBI:16215"/>
        <dbReference type="ChEBI" id="CHEBI:30616"/>
        <dbReference type="ChEBI" id="CHEBI:43474"/>
        <dbReference type="ChEBI" id="CHEBI:456216"/>
        <dbReference type="EC" id="7.3.2.2"/>
    </reaction>
</comment>
<comment type="subunit">
    <text evidence="1">The complex is composed of two ATP-binding proteins (PhnC), two transmembrane proteins (PhnE) and a solute-binding protein (PhnD).</text>
</comment>
<comment type="subcellular location">
    <subcellularLocation>
        <location evidence="1">Cell inner membrane</location>
        <topology evidence="1">Peripheral membrane protein</topology>
    </subcellularLocation>
</comment>
<comment type="similarity">
    <text evidence="1">Belongs to the ABC transporter superfamily. Phosphonates importer (TC 3.A.1.9.1) family.</text>
</comment>
<proteinExistence type="inferred from homology"/>
<name>PHNC2_PSEAB</name>
<feature type="chain" id="PRO_0000274725" description="Phosphonates import ATP-binding protein PhnC 2">
    <location>
        <begin position="1"/>
        <end position="267"/>
    </location>
</feature>
<feature type="domain" description="ABC transporter" evidence="1">
    <location>
        <begin position="3"/>
        <end position="247"/>
    </location>
</feature>
<feature type="binding site" evidence="1">
    <location>
        <begin position="36"/>
        <end position="43"/>
    </location>
    <ligand>
        <name>ATP</name>
        <dbReference type="ChEBI" id="CHEBI:30616"/>
    </ligand>
</feature>
<gene>
    <name evidence="1" type="primary">phnC2</name>
    <name type="ordered locus">PA14_21160</name>
</gene>
<evidence type="ECO:0000255" key="1">
    <source>
        <dbReference type="HAMAP-Rule" id="MF_01713"/>
    </source>
</evidence>
<keyword id="KW-0067">ATP-binding</keyword>
<keyword id="KW-0997">Cell inner membrane</keyword>
<keyword id="KW-1003">Cell membrane</keyword>
<keyword id="KW-0472">Membrane</keyword>
<keyword id="KW-0547">Nucleotide-binding</keyword>
<keyword id="KW-0918">Phosphonate transport</keyword>
<keyword id="KW-1278">Translocase</keyword>
<keyword id="KW-0813">Transport</keyword>
<reference key="1">
    <citation type="journal article" date="2006" name="Genome Biol.">
        <title>Genomic analysis reveals that Pseudomonas aeruginosa virulence is combinatorial.</title>
        <authorList>
            <person name="Lee D.G."/>
            <person name="Urbach J.M."/>
            <person name="Wu G."/>
            <person name="Liberati N.T."/>
            <person name="Feinbaum R.L."/>
            <person name="Miyata S."/>
            <person name="Diggins L.T."/>
            <person name="He J."/>
            <person name="Saucier M."/>
            <person name="Deziel E."/>
            <person name="Friedman L."/>
            <person name="Li L."/>
            <person name="Grills G."/>
            <person name="Montgomery K."/>
            <person name="Kucherlapati R."/>
            <person name="Rahme L.G."/>
            <person name="Ausubel F.M."/>
        </authorList>
    </citation>
    <scope>NUCLEOTIDE SEQUENCE [LARGE SCALE GENOMIC DNA]</scope>
    <source>
        <strain>UCBPP-PA14</strain>
    </source>
</reference>
<dbReference type="EC" id="7.3.2.2" evidence="1"/>
<dbReference type="EMBL" id="CP000438">
    <property type="protein sequence ID" value="ABJ12565.1"/>
    <property type="molecule type" value="Genomic_DNA"/>
</dbReference>
<dbReference type="RefSeq" id="WP_003138286.1">
    <property type="nucleotide sequence ID" value="NZ_CP034244.1"/>
</dbReference>
<dbReference type="SMR" id="Q02QE8"/>
<dbReference type="KEGG" id="pau:PA14_21160"/>
<dbReference type="PseudoCAP" id="PA14_21160"/>
<dbReference type="HOGENOM" id="CLU_000604_1_22_6"/>
<dbReference type="BioCyc" id="PAER208963:G1G74-1749-MONOMER"/>
<dbReference type="Proteomes" id="UP000000653">
    <property type="component" value="Chromosome"/>
</dbReference>
<dbReference type="GO" id="GO:0005886">
    <property type="term" value="C:plasma membrane"/>
    <property type="evidence" value="ECO:0007669"/>
    <property type="project" value="UniProtKB-SubCell"/>
</dbReference>
<dbReference type="GO" id="GO:0015416">
    <property type="term" value="F:ABC-type phosphonate transporter activity"/>
    <property type="evidence" value="ECO:0007669"/>
    <property type="project" value="UniProtKB-EC"/>
</dbReference>
<dbReference type="GO" id="GO:0005524">
    <property type="term" value="F:ATP binding"/>
    <property type="evidence" value="ECO:0007669"/>
    <property type="project" value="UniProtKB-KW"/>
</dbReference>
<dbReference type="GO" id="GO:0016887">
    <property type="term" value="F:ATP hydrolysis activity"/>
    <property type="evidence" value="ECO:0007669"/>
    <property type="project" value="InterPro"/>
</dbReference>
<dbReference type="Gene3D" id="3.40.50.300">
    <property type="entry name" value="P-loop containing nucleotide triphosphate hydrolases"/>
    <property type="match status" value="1"/>
</dbReference>
<dbReference type="InterPro" id="IPR003593">
    <property type="entry name" value="AAA+_ATPase"/>
</dbReference>
<dbReference type="InterPro" id="IPR003439">
    <property type="entry name" value="ABC_transporter-like_ATP-bd"/>
</dbReference>
<dbReference type="InterPro" id="IPR017871">
    <property type="entry name" value="ABC_transporter-like_CS"/>
</dbReference>
<dbReference type="InterPro" id="IPR050086">
    <property type="entry name" value="MetN_ABC_transporter-like"/>
</dbReference>
<dbReference type="InterPro" id="IPR027417">
    <property type="entry name" value="P-loop_NTPase"/>
</dbReference>
<dbReference type="PANTHER" id="PTHR43166">
    <property type="entry name" value="AMINO ACID IMPORT ATP-BINDING PROTEIN"/>
    <property type="match status" value="1"/>
</dbReference>
<dbReference type="PANTHER" id="PTHR43166:SF6">
    <property type="entry name" value="PHOSPHONATES IMPORT ATP-BINDING PROTEIN PHNC"/>
    <property type="match status" value="1"/>
</dbReference>
<dbReference type="Pfam" id="PF00005">
    <property type="entry name" value="ABC_tran"/>
    <property type="match status" value="1"/>
</dbReference>
<dbReference type="SMART" id="SM00382">
    <property type="entry name" value="AAA"/>
    <property type="match status" value="1"/>
</dbReference>
<dbReference type="SUPFAM" id="SSF52540">
    <property type="entry name" value="P-loop containing nucleoside triphosphate hydrolases"/>
    <property type="match status" value="1"/>
</dbReference>
<dbReference type="PROSITE" id="PS00211">
    <property type="entry name" value="ABC_TRANSPORTER_1"/>
    <property type="match status" value="1"/>
</dbReference>
<dbReference type="PROSITE" id="PS50893">
    <property type="entry name" value="ABC_TRANSPORTER_2"/>
    <property type="match status" value="1"/>
</dbReference>
<dbReference type="PROSITE" id="PS51249">
    <property type="entry name" value="PHNC"/>
    <property type="match status" value="1"/>
</dbReference>
<protein>
    <recommendedName>
        <fullName evidence="1">Phosphonates import ATP-binding protein PhnC 2</fullName>
        <ecNumber evidence="1">7.3.2.2</ecNumber>
    </recommendedName>
</protein>